<proteinExistence type="inferred from homology"/>
<keyword id="KW-0488">Methylation</keyword>
<keyword id="KW-0687">Ribonucleoprotein</keyword>
<keyword id="KW-0689">Ribosomal protein</keyword>
<keyword id="KW-0694">RNA-binding</keyword>
<keyword id="KW-0699">rRNA-binding</keyword>
<dbReference type="EMBL" id="CP000463">
    <property type="protein sequence ID" value="ABJ07516.1"/>
    <property type="molecule type" value="Genomic_DNA"/>
</dbReference>
<dbReference type="SMR" id="Q07KL8"/>
<dbReference type="STRING" id="316055.RPE_3586"/>
<dbReference type="KEGG" id="rpe:RPE_3586"/>
<dbReference type="eggNOG" id="COG0087">
    <property type="taxonomic scope" value="Bacteria"/>
</dbReference>
<dbReference type="HOGENOM" id="CLU_044142_2_0_5"/>
<dbReference type="OrthoDB" id="9806135at2"/>
<dbReference type="GO" id="GO:0022625">
    <property type="term" value="C:cytosolic large ribosomal subunit"/>
    <property type="evidence" value="ECO:0007669"/>
    <property type="project" value="TreeGrafter"/>
</dbReference>
<dbReference type="GO" id="GO:0019843">
    <property type="term" value="F:rRNA binding"/>
    <property type="evidence" value="ECO:0007669"/>
    <property type="project" value="UniProtKB-UniRule"/>
</dbReference>
<dbReference type="GO" id="GO:0003735">
    <property type="term" value="F:structural constituent of ribosome"/>
    <property type="evidence" value="ECO:0007669"/>
    <property type="project" value="InterPro"/>
</dbReference>
<dbReference type="GO" id="GO:0006412">
    <property type="term" value="P:translation"/>
    <property type="evidence" value="ECO:0007669"/>
    <property type="project" value="UniProtKB-UniRule"/>
</dbReference>
<dbReference type="FunFam" id="2.40.30.10:FF:000004">
    <property type="entry name" value="50S ribosomal protein L3"/>
    <property type="match status" value="1"/>
</dbReference>
<dbReference type="FunFam" id="3.30.160.810:FF:000001">
    <property type="entry name" value="50S ribosomal protein L3"/>
    <property type="match status" value="1"/>
</dbReference>
<dbReference type="Gene3D" id="3.30.160.810">
    <property type="match status" value="1"/>
</dbReference>
<dbReference type="Gene3D" id="2.40.30.10">
    <property type="entry name" value="Translation factors"/>
    <property type="match status" value="1"/>
</dbReference>
<dbReference type="HAMAP" id="MF_01325_B">
    <property type="entry name" value="Ribosomal_uL3_B"/>
    <property type="match status" value="1"/>
</dbReference>
<dbReference type="InterPro" id="IPR000597">
    <property type="entry name" value="Ribosomal_uL3"/>
</dbReference>
<dbReference type="InterPro" id="IPR019927">
    <property type="entry name" value="Ribosomal_uL3_bac/org-type"/>
</dbReference>
<dbReference type="InterPro" id="IPR019926">
    <property type="entry name" value="Ribosomal_uL3_CS"/>
</dbReference>
<dbReference type="InterPro" id="IPR009000">
    <property type="entry name" value="Transl_B-barrel_sf"/>
</dbReference>
<dbReference type="NCBIfam" id="TIGR03625">
    <property type="entry name" value="L3_bact"/>
    <property type="match status" value="1"/>
</dbReference>
<dbReference type="PANTHER" id="PTHR11229">
    <property type="entry name" value="50S RIBOSOMAL PROTEIN L3"/>
    <property type="match status" value="1"/>
</dbReference>
<dbReference type="PANTHER" id="PTHR11229:SF16">
    <property type="entry name" value="LARGE RIBOSOMAL SUBUNIT PROTEIN UL3C"/>
    <property type="match status" value="1"/>
</dbReference>
<dbReference type="Pfam" id="PF00297">
    <property type="entry name" value="Ribosomal_L3"/>
    <property type="match status" value="1"/>
</dbReference>
<dbReference type="SUPFAM" id="SSF50447">
    <property type="entry name" value="Translation proteins"/>
    <property type="match status" value="1"/>
</dbReference>
<dbReference type="PROSITE" id="PS00474">
    <property type="entry name" value="RIBOSOMAL_L3"/>
    <property type="match status" value="1"/>
</dbReference>
<reference key="1">
    <citation type="submission" date="2006-09" db="EMBL/GenBank/DDBJ databases">
        <title>Complete sequence of Rhodopseudomonas palustris BisA53.</title>
        <authorList>
            <consortium name="US DOE Joint Genome Institute"/>
            <person name="Copeland A."/>
            <person name="Lucas S."/>
            <person name="Lapidus A."/>
            <person name="Barry K."/>
            <person name="Detter J.C."/>
            <person name="Glavina del Rio T."/>
            <person name="Hammon N."/>
            <person name="Israni S."/>
            <person name="Dalin E."/>
            <person name="Tice H."/>
            <person name="Pitluck S."/>
            <person name="Chain P."/>
            <person name="Malfatti S."/>
            <person name="Shin M."/>
            <person name="Vergez L."/>
            <person name="Schmutz J."/>
            <person name="Larimer F."/>
            <person name="Land M."/>
            <person name="Hauser L."/>
            <person name="Pelletier D.A."/>
            <person name="Kyrpides N."/>
            <person name="Kim E."/>
            <person name="Harwood C.S."/>
            <person name="Oda Y."/>
            <person name="Richardson P."/>
        </authorList>
    </citation>
    <scope>NUCLEOTIDE SEQUENCE [LARGE SCALE GENOMIC DNA]</scope>
    <source>
        <strain>BisA53</strain>
    </source>
</reference>
<name>RL3_RHOP5</name>
<sequence length="240" mass="25467">MRSGVIAQKVGMTRVFTETGEHIPVTVLKLGNCQVLGHRTSEKNGYTALQLGSGSRKTVYMPKAERGQFAAAKVEPKRKVAEFRVSEDSMIPIGAEIQADHFVVGQFVDVTGTSVGKGFAGGIKRWNFGGLRATHGVSVSHRSIGSTGGRQDPGKTFKNKKMPGHMGVDRITTLNLRVVQLDVERGLILVEGAVPGSKGGWIAVRDAVKKALPADAPKPGKFRLADGGEQAAPAAEQEGV</sequence>
<protein>
    <recommendedName>
        <fullName evidence="1">Large ribosomal subunit protein uL3</fullName>
    </recommendedName>
    <alternativeName>
        <fullName evidence="3">50S ribosomal protein L3</fullName>
    </alternativeName>
</protein>
<organism>
    <name type="scientific">Rhodopseudomonas palustris (strain BisA53)</name>
    <dbReference type="NCBI Taxonomy" id="316055"/>
    <lineage>
        <taxon>Bacteria</taxon>
        <taxon>Pseudomonadati</taxon>
        <taxon>Pseudomonadota</taxon>
        <taxon>Alphaproteobacteria</taxon>
        <taxon>Hyphomicrobiales</taxon>
        <taxon>Nitrobacteraceae</taxon>
        <taxon>Rhodopseudomonas</taxon>
    </lineage>
</organism>
<gene>
    <name evidence="1" type="primary">rplC</name>
    <name type="ordered locus">RPE_3586</name>
</gene>
<evidence type="ECO:0000255" key="1">
    <source>
        <dbReference type="HAMAP-Rule" id="MF_01325"/>
    </source>
</evidence>
<evidence type="ECO:0000256" key="2">
    <source>
        <dbReference type="SAM" id="MobiDB-lite"/>
    </source>
</evidence>
<evidence type="ECO:0000305" key="3"/>
<feature type="chain" id="PRO_1000052122" description="Large ribosomal subunit protein uL3">
    <location>
        <begin position="1"/>
        <end position="240"/>
    </location>
</feature>
<feature type="region of interest" description="Disordered" evidence="2">
    <location>
        <begin position="139"/>
        <end position="164"/>
    </location>
</feature>
<feature type="region of interest" description="Disordered" evidence="2">
    <location>
        <begin position="215"/>
        <end position="240"/>
    </location>
</feature>
<feature type="compositionally biased region" description="Low complexity" evidence="2">
    <location>
        <begin position="225"/>
        <end position="240"/>
    </location>
</feature>
<feature type="modified residue" description="N5-methylglutamine" evidence="1">
    <location>
        <position position="151"/>
    </location>
</feature>
<accession>Q07KL8</accession>
<comment type="function">
    <text evidence="1">One of the primary rRNA binding proteins, it binds directly near the 3'-end of the 23S rRNA, where it nucleates assembly of the 50S subunit.</text>
</comment>
<comment type="subunit">
    <text evidence="1">Part of the 50S ribosomal subunit. Forms a cluster with proteins L14 and L19.</text>
</comment>
<comment type="PTM">
    <text evidence="1">Methylated by PrmB.</text>
</comment>
<comment type="similarity">
    <text evidence="1">Belongs to the universal ribosomal protein uL3 family.</text>
</comment>